<evidence type="ECO:0000250" key="1">
    <source>
        <dbReference type="UniProtKB" id="A2XE98"/>
    </source>
</evidence>
<evidence type="ECO:0000250" key="2">
    <source>
        <dbReference type="UniProtKB" id="O04986"/>
    </source>
</evidence>
<evidence type="ECO:0000250" key="3">
    <source>
        <dbReference type="UniProtKB" id="P68168"/>
    </source>
</evidence>
<evidence type="ECO:0000250" key="4">
    <source>
        <dbReference type="UniProtKB" id="Q42831"/>
    </source>
</evidence>
<evidence type="ECO:0000255" key="5">
    <source>
        <dbReference type="PROSITE-ProRule" id="PRU00238"/>
    </source>
</evidence>
<evidence type="ECO:0000305" key="6"/>
<dbReference type="EC" id="1.7.2.-" evidence="2"/>
<dbReference type="EMBL" id="AY005818">
    <property type="protein sequence ID" value="AAG01375.1"/>
    <property type="molecule type" value="Genomic_DNA"/>
</dbReference>
<dbReference type="EMBL" id="AF236080">
    <property type="protein sequence ID" value="AAF44664.1"/>
    <property type="molecule type" value="mRNA"/>
</dbReference>
<dbReference type="RefSeq" id="NP_001104966.1">
    <property type="nucleotide sequence ID" value="NM_001111496.1"/>
</dbReference>
<dbReference type="SMR" id="Q9FY42"/>
<dbReference type="FunCoup" id="Q9FY42">
    <property type="interactions" value="1240"/>
</dbReference>
<dbReference type="STRING" id="4577.Q9FY42"/>
<dbReference type="PaxDb" id="4577-GRMZM2G067402_P01"/>
<dbReference type="GeneID" id="541815"/>
<dbReference type="KEGG" id="zma:541815"/>
<dbReference type="MaizeGDB" id="292897"/>
<dbReference type="eggNOG" id="KOG3378">
    <property type="taxonomic scope" value="Eukaryota"/>
</dbReference>
<dbReference type="InParanoid" id="Q9FY42"/>
<dbReference type="OrthoDB" id="436496at2759"/>
<dbReference type="Proteomes" id="UP000007305">
    <property type="component" value="Unplaced"/>
</dbReference>
<dbReference type="ExpressionAtlas" id="Q9FY42">
    <property type="expression patterns" value="baseline and differential"/>
</dbReference>
<dbReference type="GO" id="GO:0005737">
    <property type="term" value="C:cytoplasm"/>
    <property type="evidence" value="ECO:0007669"/>
    <property type="project" value="UniProtKB-SubCell"/>
</dbReference>
<dbReference type="GO" id="GO:0005634">
    <property type="term" value="C:nucleus"/>
    <property type="evidence" value="ECO:0007669"/>
    <property type="project" value="UniProtKB-SubCell"/>
</dbReference>
<dbReference type="GO" id="GO:0020037">
    <property type="term" value="F:heme binding"/>
    <property type="evidence" value="ECO:0007669"/>
    <property type="project" value="InterPro"/>
</dbReference>
<dbReference type="GO" id="GO:0046872">
    <property type="term" value="F:metal ion binding"/>
    <property type="evidence" value="ECO:0007669"/>
    <property type="project" value="UniProtKB-KW"/>
</dbReference>
<dbReference type="GO" id="GO:0016491">
    <property type="term" value="F:oxidoreductase activity"/>
    <property type="evidence" value="ECO:0007669"/>
    <property type="project" value="UniProtKB-KW"/>
</dbReference>
<dbReference type="GO" id="GO:0019825">
    <property type="term" value="F:oxygen binding"/>
    <property type="evidence" value="ECO:0007669"/>
    <property type="project" value="InterPro"/>
</dbReference>
<dbReference type="CDD" id="cd14784">
    <property type="entry name" value="class1_nsHb-like"/>
    <property type="match status" value="1"/>
</dbReference>
<dbReference type="Gene3D" id="1.10.490.10">
    <property type="entry name" value="Globins"/>
    <property type="match status" value="1"/>
</dbReference>
<dbReference type="InterPro" id="IPR000971">
    <property type="entry name" value="Globin"/>
</dbReference>
<dbReference type="InterPro" id="IPR009050">
    <property type="entry name" value="Globin-like_sf"/>
</dbReference>
<dbReference type="InterPro" id="IPR012292">
    <property type="entry name" value="Globin/Proto"/>
</dbReference>
<dbReference type="InterPro" id="IPR001032">
    <property type="entry name" value="Leghaemoglobin-like"/>
</dbReference>
<dbReference type="InterPro" id="IPR019824">
    <property type="entry name" value="Leghaemoglobin_Fe_BS"/>
</dbReference>
<dbReference type="PANTHER" id="PTHR22924">
    <property type="entry name" value="LEGHEMOGLOBIN-RELATED"/>
    <property type="match status" value="1"/>
</dbReference>
<dbReference type="PANTHER" id="PTHR22924:SF98">
    <property type="entry name" value="NON-SYMBIOTIC HEMOGLOBIN 3"/>
    <property type="match status" value="1"/>
</dbReference>
<dbReference type="Pfam" id="PF00042">
    <property type="entry name" value="Globin"/>
    <property type="match status" value="1"/>
</dbReference>
<dbReference type="PRINTS" id="PR00188">
    <property type="entry name" value="PLANTGLOBIN"/>
</dbReference>
<dbReference type="SUPFAM" id="SSF46458">
    <property type="entry name" value="Globin-like"/>
    <property type="match status" value="1"/>
</dbReference>
<dbReference type="PROSITE" id="PS01033">
    <property type="entry name" value="GLOBIN"/>
    <property type="match status" value="1"/>
</dbReference>
<dbReference type="PROSITE" id="PS00208">
    <property type="entry name" value="PLANT_GLOBIN"/>
    <property type="match status" value="1"/>
</dbReference>
<organism>
    <name type="scientific">Zea mays</name>
    <name type="common">Maize</name>
    <dbReference type="NCBI Taxonomy" id="4577"/>
    <lineage>
        <taxon>Eukaryota</taxon>
        <taxon>Viridiplantae</taxon>
        <taxon>Streptophyta</taxon>
        <taxon>Embryophyta</taxon>
        <taxon>Tracheophyta</taxon>
        <taxon>Spermatophyta</taxon>
        <taxon>Magnoliopsida</taxon>
        <taxon>Liliopsida</taxon>
        <taxon>Poales</taxon>
        <taxon>Poaceae</taxon>
        <taxon>PACMAD clade</taxon>
        <taxon>Panicoideae</taxon>
        <taxon>Andropogonodae</taxon>
        <taxon>Andropogoneae</taxon>
        <taxon>Tripsacinae</taxon>
        <taxon>Zea</taxon>
    </lineage>
</organism>
<accession>Q9FY42</accession>
<gene>
    <name type="primary">HB</name>
    <name type="synonym">GLB1</name>
</gene>
<feature type="chain" id="PRO_0000193018" description="Anaerobic nitrite reductase GLB1">
    <location>
        <begin position="1"/>
        <end position="165"/>
    </location>
</feature>
<feature type="domain" description="Globin" evidence="5">
    <location>
        <begin position="12"/>
        <end position="162"/>
    </location>
</feature>
<feature type="short sequence motif" description="Homodimerization" evidence="2">
    <location>
        <begin position="45"/>
        <end position="49"/>
    </location>
</feature>
<feature type="short sequence motif" description="Homodimerization" evidence="2">
    <location>
        <begin position="115"/>
        <end position="127"/>
    </location>
</feature>
<feature type="binding site" evidence="3">
    <location>
        <position position="55"/>
    </location>
    <ligand>
        <name>heme b</name>
        <dbReference type="ChEBI" id="CHEBI:60344"/>
    </ligand>
</feature>
<feature type="binding site" evidence="2">
    <location>
        <position position="69"/>
    </location>
    <ligand>
        <name>heme b</name>
        <dbReference type="ChEBI" id="CHEBI:60344"/>
    </ligand>
</feature>
<feature type="binding site" description="distal binding residue" evidence="5">
    <location>
        <position position="73"/>
    </location>
    <ligand>
        <name>heme b</name>
        <dbReference type="ChEBI" id="CHEBI:60344"/>
    </ligand>
    <ligandPart>
        <name>Fe</name>
        <dbReference type="ChEBI" id="CHEBI:18248"/>
    </ligandPart>
</feature>
<feature type="binding site" evidence="2">
    <location>
        <position position="103"/>
    </location>
    <ligand>
        <name>heme b</name>
        <dbReference type="ChEBI" id="CHEBI:60344"/>
    </ligand>
</feature>
<feature type="binding site" evidence="2">
    <location>
        <position position="107"/>
    </location>
    <ligand>
        <name>heme b</name>
        <dbReference type="ChEBI" id="CHEBI:60344"/>
    </ligand>
</feature>
<feature type="binding site" description="proximal binding residue" evidence="5">
    <location>
        <position position="108"/>
    </location>
    <ligand>
        <name>heme b</name>
        <dbReference type="ChEBI" id="CHEBI:60344"/>
    </ligand>
    <ligandPart>
        <name>Fe</name>
        <dbReference type="ChEBI" id="CHEBI:18248"/>
    </ligandPart>
</feature>
<feature type="site" description="Homodimerization" evidence="2">
    <location>
        <position position="143"/>
    </location>
</feature>
<feature type="sequence conflict" description="In Ref. 1; AAF44664." evidence="6" ref="1">
    <original>E</original>
    <variation>K</variation>
    <location>
        <position position="51"/>
    </location>
</feature>
<reference key="1">
    <citation type="journal article" date="2001" name="Biochim. Biophys. Acta">
        <title>Cloning and expression analysis of hemoglobin genes from maize (Zea mays ssp. mays) and teosinte (Zea mays ssp. parviglumis).</title>
        <authorList>
            <person name="Arechaga-Ocampo E."/>
            <person name="Saenz-Rivera J."/>
            <person name="Sarath G."/>
            <person name="Klucas R.V."/>
            <person name="Arredondo-Peter R."/>
        </authorList>
    </citation>
    <scope>NUCLEOTIDE SEQUENCE [GENOMIC DNA]</scope>
</reference>
<reference key="2">
    <citation type="submission" date="2000-02" db="EMBL/GenBank/DDBJ databases">
        <title>Sequence and analysis of a nonsymbiotic hemoglobin gene from maize.</title>
        <authorList>
            <person name="Guy P.A."/>
            <person name="Hill R.D."/>
        </authorList>
    </citation>
    <scope>NUCLEOTIDE SEQUENCE</scope>
    <source>
        <tissue>Root</tissue>
    </source>
</reference>
<proteinExistence type="evidence at transcript level"/>
<name>HBL_MAIZE</name>
<keyword id="KW-0963">Cytoplasm</keyword>
<keyword id="KW-0349">Heme</keyword>
<keyword id="KW-0408">Iron</keyword>
<keyword id="KW-0479">Metal-binding</keyword>
<keyword id="KW-0539">Nucleus</keyword>
<keyword id="KW-0560">Oxidoreductase</keyword>
<keyword id="KW-1185">Reference proteome</keyword>
<protein>
    <recommendedName>
        <fullName evidence="2">Anaerobic nitrite reductase GLB1</fullName>
        <ecNumber evidence="2">1.7.2.-</ecNumber>
    </recommendedName>
    <alternativeName>
        <fullName>Hbm</fullName>
    </alternativeName>
    <alternativeName>
        <fullName>Non-symbiotic hemoglobin</fullName>
    </alternativeName>
    <alternativeName>
        <fullName>ZEAma GLB1</fullName>
    </alternativeName>
</protein>
<sequence>MALAEADDGAVVFGEEQEALVLKSWAVMKKDAANLGLRFFLKVFEIAPSAEQMFSFLRDSDVPLEKNPKLKTHAMSVFVMTCEAAAQLRKAGKVTVRETTLKRLGATHLRYGVADGHFEVTGFALLETIKEALPADMWSLEMKKAWAEAYSQLVAAIKREMKPDA</sequence>
<comment type="function">
    <text evidence="2 4">Phytoglobin that reduces nitrite to nitric oxide (NO) under anoxic conditions (e.g. during flooding or in waterlogged soil) (By similarity). May not function as an oxygen storage or transport protein (By similarity). Has an unusually high affinity for O(2) through an hexacoordinate heme iron because of a very low dissociation constant (By similarity).</text>
</comment>
<comment type="catalytic activity">
    <reaction evidence="2">
        <text>Fe(III)-heme b-[protein] + nitric oxide + H2O = Fe(II)-heme b-[protein] + nitrite + 2 H(+)</text>
        <dbReference type="Rhea" id="RHEA:77711"/>
        <dbReference type="Rhea" id="RHEA-COMP:18975"/>
        <dbReference type="Rhea" id="RHEA-COMP:18976"/>
        <dbReference type="ChEBI" id="CHEBI:15377"/>
        <dbReference type="ChEBI" id="CHEBI:15378"/>
        <dbReference type="ChEBI" id="CHEBI:16301"/>
        <dbReference type="ChEBI" id="CHEBI:16480"/>
        <dbReference type="ChEBI" id="CHEBI:55376"/>
        <dbReference type="ChEBI" id="CHEBI:60344"/>
    </reaction>
    <physiologicalReaction direction="right-to-left" evidence="2">
        <dbReference type="Rhea" id="RHEA:77713"/>
    </physiologicalReaction>
</comment>
<comment type="cofactor">
    <cofactor evidence="3">
        <name>heme b</name>
        <dbReference type="ChEBI" id="CHEBI:60344"/>
    </cofactor>
    <text evidence="3">Binds 1 heme group per subunit.</text>
</comment>
<comment type="subunit">
    <text evidence="2">Homodimer.</text>
</comment>
<comment type="subcellular location">
    <subcellularLocation>
        <location evidence="1">Cytoplasm</location>
    </subcellularLocation>
    <subcellularLocation>
        <location evidence="1">Nucleus</location>
    </subcellularLocation>
</comment>
<comment type="tissue specificity">
    <text>In embryonic organs and at low levels in vegetative organs.</text>
</comment>
<comment type="similarity">
    <text evidence="6">Belongs to the plant globin family.</text>
</comment>